<name>PUM1_PONAB</name>
<comment type="function">
    <text evidence="1 2">Sequence-specific RNA-binding protein that acts as a post-transcriptional repressor by binding the 3'-UTR of mRNA targets. Binds to an RNA consensus sequence, the Pumilio Response Element (PRE), 5'-UGUANAUA-3', that is related to the Nanos Response Element (NRE). Mediates post-transcriptional repression of transcripts via different mechanisms: acts via direct recruitment of the CCR4-POP2-NOT deadenylase leading to translational inhibition and mRNA degradation. Also mediates deadenylation-independent repression by promoting accessibility of miRNAs. Following growth factor stimulation, phosphorylated and binds to the 3'-UTR of CDKN1B/p27 mRNA, inducing a local conformational change that exposes miRNA-binding sites, promoting association of miR-221 and miR-222, efficient suppression of CDKN1B/p27 expression, and rapid entry to the cell cycle. Acts as a post-transcriptional repressor of E2F3 mRNAs by binding to its 3'-UTR and facilitating miRNA regulation. Represses a program of genes necessary to maintain genomic stability such as key mitotic, DNA repair and DNA replication factors. Its ability to repress those target mRNAs is regulated by the lncRNA NORAD (non-coding RNA activated by DNA damage) which, due to its high abundance and multitude of PUMILIO binding sites, is able to sequester a significant fraction of PUM1 and PUM2 in the cytoplasm. Involved in neuronal functions by regulating ATXN1 mRNA levels: acts by binding to the 3'-UTR of ATXN1 transcripts, leading to their down-regulation independently of the miRNA machinery. Plays a role in cytoplasmic sensing of viral infection (By similarity). In testis, acts as a post-transcriptional regulator of spermatogenesis by binding to the 3'-UTR of mRNAs coding for regulators of p53/TP53. Involved in embryonic stem cell renewal by facilitating the exit from the ground state: acts by targeting mRNAs coding for naive pluripotency transcription factors and accelerates their down-regulation at the onset of differentiation (By similarity). Binds specifically to miRNA MIR199A precursor, with PUM2, regulates miRNA MIR199A expression at a postranscriptional level (By similarity).</text>
</comment>
<comment type="subunit">
    <text evidence="1">Recruits the CCR4-POP2-NOT deadenylase leading to translational inhibition and mRNA degradation (By similarity). Interacts with TRIM71 (via NHL repeats) in an RNA-dependent manner (By similarity).</text>
</comment>
<comment type="subcellular location">
    <subcellularLocation>
        <location evidence="1">Cytoplasm</location>
    </subcellularLocation>
    <subcellularLocation>
        <location evidence="1">Cytoplasm</location>
        <location evidence="1">P-body</location>
    </subcellularLocation>
    <subcellularLocation>
        <location evidence="1">Cytoplasmic granule</location>
    </subcellularLocation>
</comment>
<comment type="domain">
    <text evidence="1">The pumilio repeats mediate the association with RNA by packing together to form a right-handed superhelix that approximates a half donut. RNA-binding occurs on the concave side of the surface. PUM1 is composed of 8 pumilio repeats of 36 residues; each repeat binds a single nucleotide in its RNA target. Residues at positions 12 and 16 of the pumilio repeat bind each RNA base via hydrogen bonding or van der Waals contacts with the Watson-Crick edge, while the amino acid at position 13 makes a stacking interaction. The recognition of RNA by pumilio repeats is base specific: cysteine and glutamine at position 12 and 16, respectively, bind adenine; asparagine and glutamine bind uracil; and serine and glutamate bind guanine.</text>
</comment>
<comment type="PTM">
    <text evidence="1">Phosphorylation at Ser-714 promotes RNA-binding activity. Following growth factor stimulation phosphorylated at Ser-714, promoting binding to the 3'-UTR of CDKN1B/p27 mRNA.</text>
</comment>
<accession>Q5R5X3</accession>
<proteinExistence type="evidence at transcript level"/>
<sequence length="1186" mass="126443">MSVACVLKRKAVLWQDSFSPHLKHHPQEPANPNMPVVLTSGTGSQAQPQPAANQALAAGTHSSPVPGSIGVAGRSQDDAMVDYFFQRQHGEQLGGGGSGGGGYNNSKHRWPTGDNIHAEHQVRSMDELNHDFQALALEGRAMGEQLLPGKKFWETDESSKDGPKGIFLGDQWRDSAWGTSDHSVSQPIMVQRRPGQSFHVNSEVNSVLSPRSESGGLGVSMVEYVLSSSPGDSCLRKGGFGPRDADSDENDKGEKKNKGTFDGDKLGDLKEEGDVMDKTNGLPVQNGIDADVKDFSRTPGNCQNSANEVDLLGPNQNGSEGLAQLTSTNGAKPVEDFSNMESQSVPLDPMEHVGMEPLQFDYSGTQVPVDSAAATVGLFDYNSQQQLFQRPNALAVQQLTAAQQQQYALAAAHQPHIGLAPAAFVPNPYIISAAPPGTDPYTAGLAAAATLGPAVVPHQYYGVTPWGVYPASLFQQQAAAAAAATNSANQQTTPQAQQGQQQVLRGGASQRPLTPNQNQQGQQTDPLVAAAAVNSALAFGQGLAAGMPGYPVLAPAAYYDQTGALVVNAGARNGLGAPVRLVAPAPVIISSSAAQAAVAAAAASANGAAGGLAGTTNGPFRPLGTQQPQPQPQQQPNNNLASSSFYGNNSLNSNSQSSSLFSQGSAQPANTSLGFGSSSSLGATLGSALGGFGTAVANSNTGSGSRRDSLTGSSDLYKRTSSSLTPIGHSFYNGLSFSSSPGPVGMPLPSQGPGHSQTPPPSLSSHGSSSSLNLGGLTNGGGRYISAAPGAEAKYRSASSASSLFSPSSTLFSSSRLRYGMSDVMPSGRSRLLEDFRNNRYPNLQLREIAGHIMEFSQDQHGSRFIQLKLERATPAERQLVFNEILQAAYQLMVDVFGNYVIQKFFEFGSLEQKLALAERIRGHVLSLALQMYGCRVIQKALEFIPSDQQNEMVRELDGHVLKCVKDQNGNHVVQKCIECVQPQSLQFIIDAFKGQVFALSTHPYGCRVIQRILEHCLPDQTLPILEELHQHTEQLVQDQYGNYVIQHVLEHGRPEDKSKIVAEIRGNVLVLSQHKFASNVVEKCVTHASRTERAVLIDEVCTMNDGPHSALYTMMKDQYANYVVQKMIDVAEPGQRKIVMHKIRPHIATLRKYTYGKHILAKLEKYYMKNGVDLGPICGPPNGII</sequence>
<protein>
    <recommendedName>
        <fullName evidence="6">Pumilio homolog 1</fullName>
    </recommendedName>
</protein>
<keyword id="KW-0007">Acetylation</keyword>
<keyword id="KW-0963">Cytoplasm</keyword>
<keyword id="KW-0221">Differentiation</keyword>
<keyword id="KW-0488">Methylation</keyword>
<keyword id="KW-0597">Phosphoprotein</keyword>
<keyword id="KW-1185">Reference proteome</keyword>
<keyword id="KW-0677">Repeat</keyword>
<keyword id="KW-0694">RNA-binding</keyword>
<keyword id="KW-0744">Spermatogenesis</keyword>
<keyword id="KW-0810">Translation regulation</keyword>
<gene>
    <name type="primary">PUM1</name>
</gene>
<reference key="1">
    <citation type="submission" date="2004-11" db="EMBL/GenBank/DDBJ databases">
        <authorList>
            <consortium name="The German cDNA consortium"/>
        </authorList>
    </citation>
    <scope>NUCLEOTIDE SEQUENCE [LARGE SCALE MRNA]</scope>
    <source>
        <tissue>Brain cortex</tissue>
    </source>
</reference>
<organism>
    <name type="scientific">Pongo abelii</name>
    <name type="common">Sumatran orangutan</name>
    <name type="synonym">Pongo pygmaeus abelii</name>
    <dbReference type="NCBI Taxonomy" id="9601"/>
    <lineage>
        <taxon>Eukaryota</taxon>
        <taxon>Metazoa</taxon>
        <taxon>Chordata</taxon>
        <taxon>Craniata</taxon>
        <taxon>Vertebrata</taxon>
        <taxon>Euteleostomi</taxon>
        <taxon>Mammalia</taxon>
        <taxon>Eutheria</taxon>
        <taxon>Euarchontoglires</taxon>
        <taxon>Primates</taxon>
        <taxon>Haplorrhini</taxon>
        <taxon>Catarrhini</taxon>
        <taxon>Hominidae</taxon>
        <taxon>Pongo</taxon>
    </lineage>
</organism>
<feature type="initiator methionine" description="Removed" evidence="1">
    <location>
        <position position="1"/>
    </location>
</feature>
<feature type="chain" id="PRO_0000312355" description="Pumilio homolog 1">
    <location>
        <begin position="2"/>
        <end position="1186"/>
    </location>
</feature>
<feature type="domain" description="PUM-HD" evidence="4">
    <location>
        <begin position="828"/>
        <end position="1168"/>
    </location>
</feature>
<feature type="repeat" description="Pumilio 1">
    <location>
        <begin position="848"/>
        <end position="883"/>
    </location>
</feature>
<feature type="repeat" description="Pumilio 2">
    <location>
        <begin position="884"/>
        <end position="919"/>
    </location>
</feature>
<feature type="repeat" description="Pumilio 3">
    <location>
        <begin position="920"/>
        <end position="955"/>
    </location>
</feature>
<feature type="repeat" description="Pumilio 4">
    <location>
        <begin position="956"/>
        <end position="991"/>
    </location>
</feature>
<feature type="repeat" description="Pumilio 5">
    <location>
        <begin position="992"/>
        <end position="1027"/>
    </location>
</feature>
<feature type="repeat" description="Pumilio 6">
    <location>
        <begin position="1028"/>
        <end position="1063"/>
    </location>
</feature>
<feature type="repeat" description="Pumilio 7">
    <location>
        <begin position="1064"/>
        <end position="1099"/>
    </location>
</feature>
<feature type="repeat" description="Pumilio 8">
    <location>
        <begin position="1103"/>
        <end position="1142"/>
    </location>
</feature>
<feature type="region of interest" description="Disordered" evidence="5">
    <location>
        <begin position="22"/>
        <end position="73"/>
    </location>
</feature>
<feature type="region of interest" description="Disordered" evidence="5">
    <location>
        <begin position="233"/>
        <end position="272"/>
    </location>
</feature>
<feature type="region of interest" description="Disordered" evidence="5">
    <location>
        <begin position="485"/>
        <end position="524"/>
    </location>
</feature>
<feature type="region of interest" description="Disordered" evidence="5">
    <location>
        <begin position="613"/>
        <end position="648"/>
    </location>
</feature>
<feature type="region of interest" description="Disordered" evidence="5">
    <location>
        <begin position="742"/>
        <end position="775"/>
    </location>
</feature>
<feature type="region of interest" description="Adenine-nucleotide binding in RNA target" evidence="1">
    <location>
        <begin position="863"/>
        <end position="867"/>
    </location>
</feature>
<feature type="region of interest" description="Uracil-nucleotide binding in RNA target" evidence="1">
    <location>
        <begin position="899"/>
        <end position="903"/>
    </location>
</feature>
<feature type="region of interest" description="Adenine-nucleotide binding in RNA target" evidence="1">
    <location>
        <begin position="935"/>
        <end position="939"/>
    </location>
</feature>
<feature type="region of interest" description="Non-specific-nucleotide binding in RNA target" evidence="1">
    <location>
        <begin position="971"/>
        <end position="975"/>
    </location>
</feature>
<feature type="region of interest" description="Adenine-nucleotide binding in RNA target" evidence="1">
    <location>
        <begin position="1007"/>
        <end position="1011"/>
    </location>
</feature>
<feature type="region of interest" description="Uracil-nucleotide binding in RNA target" evidence="1">
    <location>
        <begin position="1043"/>
        <end position="1047"/>
    </location>
</feature>
<feature type="region of interest" description="Guanine-nucleotide binding in RNA target" evidence="1">
    <location>
        <begin position="1079"/>
        <end position="1083"/>
    </location>
</feature>
<feature type="region of interest" description="Guanine-nucleotide binding in RNA target" evidence="1">
    <location>
        <begin position="1080"/>
        <end position="1083"/>
    </location>
</feature>
<feature type="region of interest" description="Uracil-nucleotide binding in RNA target" evidence="1">
    <location>
        <begin position="1122"/>
        <end position="1126"/>
    </location>
</feature>
<feature type="compositionally biased region" description="Low complexity" evidence="5">
    <location>
        <begin position="45"/>
        <end position="58"/>
    </location>
</feature>
<feature type="compositionally biased region" description="Basic and acidic residues" evidence="5">
    <location>
        <begin position="250"/>
        <end position="272"/>
    </location>
</feature>
<feature type="compositionally biased region" description="Low complexity" evidence="5">
    <location>
        <begin position="485"/>
        <end position="502"/>
    </location>
</feature>
<feature type="compositionally biased region" description="Polar residues" evidence="5">
    <location>
        <begin position="511"/>
        <end position="524"/>
    </location>
</feature>
<feature type="compositionally biased region" description="Low complexity" evidence="5">
    <location>
        <begin position="626"/>
        <end position="639"/>
    </location>
</feature>
<feature type="compositionally biased region" description="Low complexity" evidence="5">
    <location>
        <begin position="763"/>
        <end position="775"/>
    </location>
</feature>
<feature type="modified residue" description="N-acetylserine" evidence="1">
    <location>
        <position position="2"/>
    </location>
</feature>
<feature type="modified residue" description="Phosphoserine" evidence="1">
    <location>
        <position position="19"/>
    </location>
</feature>
<feature type="modified residue" description="Phosphoserine" evidence="1">
    <location>
        <position position="75"/>
    </location>
</feature>
<feature type="modified residue" description="Phosphoserine" evidence="1">
    <location>
        <position position="98"/>
    </location>
</feature>
<feature type="modified residue" description="Phosphoserine" evidence="1">
    <location>
        <position position="106"/>
    </location>
</feature>
<feature type="modified residue" description="Phosphothreonine" evidence="1">
    <location>
        <position position="112"/>
    </location>
</feature>
<feature type="modified residue" description="Phosphoserine" evidence="1">
    <location>
        <position position="124"/>
    </location>
</feature>
<feature type="modified residue" description="Phosphoserine" evidence="1">
    <location>
        <position position="159"/>
    </location>
</feature>
<feature type="modified residue" description="Phosphoserine" evidence="1">
    <location>
        <position position="197"/>
    </location>
</feature>
<feature type="modified residue" description="Phosphoserine" evidence="1">
    <location>
        <position position="209"/>
    </location>
</feature>
<feature type="modified residue" description="Phosphoserine" evidence="1">
    <location>
        <position position="229"/>
    </location>
</feature>
<feature type="modified residue" description="Phosphoserine" evidence="3">
    <location>
        <position position="305"/>
    </location>
</feature>
<feature type="modified residue" description="Phosphothreonine" evidence="3">
    <location>
        <position position="514"/>
    </location>
</feature>
<feature type="modified residue" description="Phosphoserine" evidence="1">
    <location>
        <position position="709"/>
    </location>
</feature>
<feature type="modified residue" description="Phosphoserine" evidence="1">
    <location>
        <position position="714"/>
    </location>
</feature>
<feature type="modified residue" description="Omega-N-methylarginine" evidence="1">
    <location>
        <position position="796"/>
    </location>
</feature>
<feature type="modified residue" description="Phosphoserine" evidence="1">
    <location>
        <position position="806"/>
    </location>
</feature>
<feature type="modified residue" description="Phosphoserine" evidence="1">
    <location>
        <position position="822"/>
    </location>
</feature>
<evidence type="ECO:0000250" key="1">
    <source>
        <dbReference type="UniProtKB" id="Q14671"/>
    </source>
</evidence>
<evidence type="ECO:0000250" key="2">
    <source>
        <dbReference type="UniProtKB" id="Q80U78"/>
    </source>
</evidence>
<evidence type="ECO:0000250" key="3">
    <source>
        <dbReference type="UniProtKB" id="Q8TB72"/>
    </source>
</evidence>
<evidence type="ECO:0000255" key="4">
    <source>
        <dbReference type="PROSITE-ProRule" id="PRU00318"/>
    </source>
</evidence>
<evidence type="ECO:0000256" key="5">
    <source>
        <dbReference type="SAM" id="MobiDB-lite"/>
    </source>
</evidence>
<evidence type="ECO:0000305" key="6"/>
<dbReference type="EMBL" id="CR860728">
    <property type="protein sequence ID" value="CAH92843.1"/>
    <property type="molecule type" value="mRNA"/>
</dbReference>
<dbReference type="RefSeq" id="NP_001127595.1">
    <property type="nucleotide sequence ID" value="NM_001134123.1"/>
</dbReference>
<dbReference type="SMR" id="Q5R5X3"/>
<dbReference type="FunCoup" id="Q5R5X3">
    <property type="interactions" value="4672"/>
</dbReference>
<dbReference type="STRING" id="9601.ENSPPYP00000001871"/>
<dbReference type="GeneID" id="100174674"/>
<dbReference type="KEGG" id="pon:100174674"/>
<dbReference type="CTD" id="9698"/>
<dbReference type="eggNOG" id="KOG1488">
    <property type="taxonomic scope" value="Eukaryota"/>
</dbReference>
<dbReference type="InParanoid" id="Q5R5X3"/>
<dbReference type="OrthoDB" id="668540at2759"/>
<dbReference type="Proteomes" id="UP000001595">
    <property type="component" value="Unplaced"/>
</dbReference>
<dbReference type="GO" id="GO:0005737">
    <property type="term" value="C:cytoplasm"/>
    <property type="evidence" value="ECO:0000250"/>
    <property type="project" value="UniProtKB"/>
</dbReference>
<dbReference type="GO" id="GO:0005829">
    <property type="term" value="C:cytosol"/>
    <property type="evidence" value="ECO:0007669"/>
    <property type="project" value="TreeGrafter"/>
</dbReference>
<dbReference type="GO" id="GO:0000932">
    <property type="term" value="C:P-body"/>
    <property type="evidence" value="ECO:0000250"/>
    <property type="project" value="UniProtKB"/>
</dbReference>
<dbReference type="GO" id="GO:0003730">
    <property type="term" value="F:mRNA 3'-UTR binding"/>
    <property type="evidence" value="ECO:0000250"/>
    <property type="project" value="UniProtKB"/>
</dbReference>
<dbReference type="GO" id="GO:0008344">
    <property type="term" value="P:adult locomotory behavior"/>
    <property type="evidence" value="ECO:0000250"/>
    <property type="project" value="UniProtKB"/>
</dbReference>
<dbReference type="GO" id="GO:0035196">
    <property type="term" value="P:miRNA processing"/>
    <property type="evidence" value="ECO:0000250"/>
    <property type="project" value="UniProtKB"/>
</dbReference>
<dbReference type="GO" id="GO:0061157">
    <property type="term" value="P:mRNA destabilization"/>
    <property type="evidence" value="ECO:0000250"/>
    <property type="project" value="UniProtKB"/>
</dbReference>
<dbReference type="GO" id="GO:2000637">
    <property type="term" value="P:positive regulation of miRNA-mediated gene silencing"/>
    <property type="evidence" value="ECO:0000250"/>
    <property type="project" value="UniProtKB"/>
</dbReference>
<dbReference type="GO" id="GO:0016441">
    <property type="term" value="P:post-transcriptional gene silencing"/>
    <property type="evidence" value="ECO:0000250"/>
    <property type="project" value="UniProtKB"/>
</dbReference>
<dbReference type="GO" id="GO:0010608">
    <property type="term" value="P:post-transcriptional regulation of gene expression"/>
    <property type="evidence" value="ECO:0000250"/>
    <property type="project" value="UniProtKB"/>
</dbReference>
<dbReference type="GO" id="GO:0051726">
    <property type="term" value="P:regulation of cell cycle"/>
    <property type="evidence" value="ECO:0000250"/>
    <property type="project" value="UniProtKB"/>
</dbReference>
<dbReference type="GO" id="GO:0051983">
    <property type="term" value="P:regulation of chromosome segregation"/>
    <property type="evidence" value="ECO:0000250"/>
    <property type="project" value="UniProtKB"/>
</dbReference>
<dbReference type="GO" id="GO:0043488">
    <property type="term" value="P:regulation of mRNA stability"/>
    <property type="evidence" value="ECO:0000250"/>
    <property type="project" value="UniProtKB"/>
</dbReference>
<dbReference type="GO" id="GO:0006417">
    <property type="term" value="P:regulation of translation"/>
    <property type="evidence" value="ECO:0007669"/>
    <property type="project" value="UniProtKB-KW"/>
</dbReference>
<dbReference type="GO" id="GO:0007283">
    <property type="term" value="P:spermatogenesis"/>
    <property type="evidence" value="ECO:0000250"/>
    <property type="project" value="UniProtKB"/>
</dbReference>
<dbReference type="GO" id="GO:0048863">
    <property type="term" value="P:stem cell differentiation"/>
    <property type="evidence" value="ECO:0000250"/>
    <property type="project" value="UniProtKB"/>
</dbReference>
<dbReference type="CDD" id="cd07920">
    <property type="entry name" value="Pumilio"/>
    <property type="match status" value="1"/>
</dbReference>
<dbReference type="FunFam" id="1.25.10.10:FF:000004">
    <property type="entry name" value="Pumilio homolog 1 isoform 2"/>
    <property type="match status" value="1"/>
</dbReference>
<dbReference type="Gene3D" id="1.25.10.10">
    <property type="entry name" value="Leucine-rich Repeat Variant"/>
    <property type="match status" value="1"/>
</dbReference>
<dbReference type="InterPro" id="IPR011989">
    <property type="entry name" value="ARM-like"/>
</dbReference>
<dbReference type="InterPro" id="IPR016024">
    <property type="entry name" value="ARM-type_fold"/>
</dbReference>
<dbReference type="InterPro" id="IPR033133">
    <property type="entry name" value="PUM-HD"/>
</dbReference>
<dbReference type="InterPro" id="IPR033712">
    <property type="entry name" value="Pumilio_RNA-bd"/>
</dbReference>
<dbReference type="InterPro" id="IPR001313">
    <property type="entry name" value="Pumilio_RNA-bd_rpt"/>
</dbReference>
<dbReference type="PANTHER" id="PTHR12537:SF1">
    <property type="entry name" value="PUMILIO HOMOLOG 1"/>
    <property type="match status" value="1"/>
</dbReference>
<dbReference type="PANTHER" id="PTHR12537">
    <property type="entry name" value="RNA BINDING PROTEIN PUMILIO-RELATED"/>
    <property type="match status" value="1"/>
</dbReference>
<dbReference type="Pfam" id="PF00806">
    <property type="entry name" value="PUF"/>
    <property type="match status" value="8"/>
</dbReference>
<dbReference type="SMART" id="SM00025">
    <property type="entry name" value="Pumilio"/>
    <property type="match status" value="8"/>
</dbReference>
<dbReference type="SUPFAM" id="SSF48371">
    <property type="entry name" value="ARM repeat"/>
    <property type="match status" value="1"/>
</dbReference>
<dbReference type="PROSITE" id="PS50302">
    <property type="entry name" value="PUM"/>
    <property type="match status" value="8"/>
</dbReference>
<dbReference type="PROSITE" id="PS50303">
    <property type="entry name" value="PUM_HD"/>
    <property type="match status" value="1"/>
</dbReference>